<feature type="chain" id="PRO_0000262870" description="Putative uncharacterized protein ART2">
    <location>
        <begin position="1"/>
        <end position="61"/>
    </location>
</feature>
<feature type="region of interest" description="Disordered" evidence="1">
    <location>
        <begin position="36"/>
        <end position="61"/>
    </location>
</feature>
<reference key="1">
    <citation type="journal article" date="1997" name="Nature">
        <title>The nucleotide sequence of Saccharomyces cerevisiae chromosome XII.</title>
        <authorList>
            <person name="Johnston M."/>
            <person name="Hillier L.W."/>
            <person name="Riles L."/>
            <person name="Albermann K."/>
            <person name="Andre B."/>
            <person name="Ansorge W."/>
            <person name="Benes V."/>
            <person name="Brueckner M."/>
            <person name="Delius H."/>
            <person name="Dubois E."/>
            <person name="Duesterhoeft A."/>
            <person name="Entian K.-D."/>
            <person name="Floeth M."/>
            <person name="Goffeau A."/>
            <person name="Hebling U."/>
            <person name="Heumann K."/>
            <person name="Heuss-Neitzel D."/>
            <person name="Hilbert H."/>
            <person name="Hilger F."/>
            <person name="Kleine K."/>
            <person name="Koetter P."/>
            <person name="Louis E.J."/>
            <person name="Messenguy F."/>
            <person name="Mewes H.-W."/>
            <person name="Miosga T."/>
            <person name="Moestl D."/>
            <person name="Mueller-Auer S."/>
            <person name="Nentwich U."/>
            <person name="Obermaier B."/>
            <person name="Piravandi E."/>
            <person name="Pohl T.M."/>
            <person name="Portetelle D."/>
            <person name="Purnelle B."/>
            <person name="Rechmann S."/>
            <person name="Rieger M."/>
            <person name="Rinke M."/>
            <person name="Rose M."/>
            <person name="Scharfe M."/>
            <person name="Scherens B."/>
            <person name="Scholler P."/>
            <person name="Schwager C."/>
            <person name="Schwarz S."/>
            <person name="Underwood A.P."/>
            <person name="Urrestarazu L.A."/>
            <person name="Vandenbol M."/>
            <person name="Verhasselt P."/>
            <person name="Vierendeels F."/>
            <person name="Voet M."/>
            <person name="Volckaert G."/>
            <person name="Voss H."/>
            <person name="Wambutt R."/>
            <person name="Wedler E."/>
            <person name="Wedler H."/>
            <person name="Zimmermann F.K."/>
            <person name="Zollner A."/>
            <person name="Hani J."/>
            <person name="Hoheisel J.D."/>
        </authorList>
    </citation>
    <scope>NUCLEOTIDE SEQUENCE [LARGE SCALE GENOMIC DNA]</scope>
    <source>
        <strain>ATCC 204508 / S288c</strain>
    </source>
</reference>
<reference key="2">
    <citation type="journal article" date="2014" name="G3 (Bethesda)">
        <title>The reference genome sequence of Saccharomyces cerevisiae: Then and now.</title>
        <authorList>
            <person name="Engel S.R."/>
            <person name="Dietrich F.S."/>
            <person name="Fisk D.G."/>
            <person name="Binkley G."/>
            <person name="Balakrishnan R."/>
            <person name="Costanzo M.C."/>
            <person name="Dwight S.S."/>
            <person name="Hitz B.C."/>
            <person name="Karra K."/>
            <person name="Nash R.S."/>
            <person name="Weng S."/>
            <person name="Wong E.D."/>
            <person name="Lloyd P."/>
            <person name="Skrzypek M.S."/>
            <person name="Miyasato S.R."/>
            <person name="Simison M."/>
            <person name="Cherry J.M."/>
        </authorList>
    </citation>
    <scope>GENOME REANNOTATION</scope>
    <source>
        <strain>ATCC 204508 / S288c</strain>
    </source>
</reference>
<reference key="3">
    <citation type="journal article" date="2002" name="Nat. Biotechnol.">
        <title>An integrated approach for finding overlooked genes in yeast.</title>
        <authorList>
            <person name="Kumar A."/>
            <person name="Harrison P.M."/>
            <person name="Cheung K.-H."/>
            <person name="Lan N."/>
            <person name="Echols N."/>
            <person name="Bertone P."/>
            <person name="Miller P."/>
            <person name="Gerstein M.B."/>
            <person name="Snyder M."/>
        </authorList>
    </citation>
    <scope>NUCLEOTIDE SEQUENCE [GENOMIC DNA]</scope>
</reference>
<name>ART2_YEAST</name>
<protein>
    <recommendedName>
        <fullName>Putative uncharacterized protein ART2</fullName>
    </recommendedName>
    <alternativeName>
        <fullName>Antisense to ribosomal RNA transcript protein 2</fullName>
    </alternativeName>
</protein>
<accession>Q8TGM7</accession>
<proteinExistence type="uncertain"/>
<evidence type="ECO:0000256" key="1">
    <source>
        <dbReference type="SAM" id="MobiDB-lite"/>
    </source>
</evidence>
<evidence type="ECO:0000305" key="2"/>
<evidence type="ECO:0000305" key="3">
    <source>
    </source>
</evidence>
<organism>
    <name type="scientific">Saccharomyces cerevisiae (strain ATCC 204508 / S288c)</name>
    <name type="common">Baker's yeast</name>
    <dbReference type="NCBI Taxonomy" id="559292"/>
    <lineage>
        <taxon>Eukaryota</taxon>
        <taxon>Fungi</taxon>
        <taxon>Dikarya</taxon>
        <taxon>Ascomycota</taxon>
        <taxon>Saccharomycotina</taxon>
        <taxon>Saccharomycetes</taxon>
        <taxon>Saccharomycetales</taxon>
        <taxon>Saccharomycetaceae</taxon>
        <taxon>Saccharomyces</taxon>
    </lineage>
</organism>
<gene>
    <name type="primary">ART2</name>
    <name type="ordered locus">YLR154W-A</name>
    <name type="ORF">YLR154W-C</name>
</gene>
<dbReference type="EMBL" id="U53879">
    <property type="status" value="NOT_ANNOTATED_CDS"/>
    <property type="molecule type" value="Genomic_DNA"/>
</dbReference>
<dbReference type="EMBL" id="Z73326">
    <property type="status" value="NOT_ANNOTATED_CDS"/>
    <property type="molecule type" value="Genomic_DNA"/>
</dbReference>
<dbReference type="EMBL" id="AF479963">
    <property type="protein sequence ID" value="AAL79276.1"/>
    <property type="molecule type" value="Genomic_DNA"/>
</dbReference>
<dbReference type="SMR" id="Q8TGM7"/>
<dbReference type="STRING" id="4932.YLR154W-A"/>
<dbReference type="PaxDb" id="4932-YLR154W-A"/>
<dbReference type="TopDownProteomics" id="Q8TGM7"/>
<dbReference type="EnsemblFungi" id="YLR154W-A_mRNA">
    <property type="protein sequence ID" value="YLR154W-A"/>
    <property type="gene ID" value="YLR154W-A"/>
</dbReference>
<dbReference type="AGR" id="SGD:S000028675"/>
<dbReference type="SGD" id="S000028675">
    <property type="gene designation" value="YLR154W-A"/>
</dbReference>
<dbReference type="eggNOG" id="ENOG502S18N">
    <property type="taxonomic scope" value="Eukaryota"/>
</dbReference>
<dbReference type="GeneTree" id="ENSGT00940000176660"/>
<dbReference type="HOGENOM" id="CLU_112614_5_2_1"/>
<dbReference type="OMA" id="GHLRCCL"/>
<dbReference type="OrthoDB" id="8092968at2759"/>
<dbReference type="InterPro" id="IPR052997">
    <property type="entry name" value="RRT15-like"/>
</dbReference>
<dbReference type="PANTHER" id="PTHR33047">
    <property type="entry name" value="PROTEIN TAR1"/>
    <property type="match status" value="1"/>
</dbReference>
<dbReference type="PANTHER" id="PTHR33047:SF8">
    <property type="entry name" value="REGULATOR OF RDNA TRANSCRIPTION PROTEIN 15"/>
    <property type="match status" value="1"/>
</dbReference>
<sequence length="61" mass="6921">MVCIHTENQNQGGFYPFVLLEISVLHEPPLGHLRYRLTDVPPQPNSPPDNVFNPDQPRMGP</sequence>
<comment type="miscellaneous">
    <text evidence="2">Encoded on the antisense strand of the nuclear 25S rDNA.</text>
</comment>
<comment type="similarity">
    <text evidence="2">Belongs to the ART2/RRT15 family.</text>
</comment>
<comment type="caution">
    <text evidence="3">Product of a dubious gene prediction unlikely to encode a functional protein. Because of that it is not part of the S.cerevisiae S288c complete/reference proteome set.</text>
</comment>